<proteinExistence type="evidence at protein level"/>
<evidence type="ECO:0000250" key="1"/>
<evidence type="ECO:0000255" key="2"/>
<evidence type="ECO:0000255" key="3">
    <source>
        <dbReference type="PROSITE-ProRule" id="PRU00174"/>
    </source>
</evidence>
<evidence type="ECO:0000256" key="4">
    <source>
        <dbReference type="SAM" id="MobiDB-lite"/>
    </source>
</evidence>
<evidence type="ECO:0000269" key="5">
    <source>
    </source>
</evidence>
<evidence type="ECO:0000269" key="6">
    <source>
    </source>
</evidence>
<evidence type="ECO:0000269" key="7">
    <source>
    </source>
</evidence>
<evidence type="ECO:0000269" key="8">
    <source>
    </source>
</evidence>
<evidence type="ECO:0000303" key="9">
    <source>
    </source>
</evidence>
<evidence type="ECO:0000305" key="10"/>
<evidence type="ECO:0007829" key="11">
    <source>
        <dbReference type="PDB" id="6PXU"/>
    </source>
</evidence>
<keyword id="KW-0002">3D-structure</keyword>
<keyword id="KW-0025">Alternative splicing</keyword>
<keyword id="KW-0225">Disease variant</keyword>
<keyword id="KW-1015">Disulfide bond</keyword>
<keyword id="KW-0328">Glycosyltransferase</keyword>
<keyword id="KW-0333">Golgi apparatus</keyword>
<keyword id="KW-0430">Lectin</keyword>
<keyword id="KW-0464">Manganese</keyword>
<keyword id="KW-0472">Membrane</keyword>
<keyword id="KW-0479">Metal-binding</keyword>
<keyword id="KW-1267">Proteomics identification</keyword>
<keyword id="KW-1185">Reference proteome</keyword>
<keyword id="KW-0735">Signal-anchor</keyword>
<keyword id="KW-0808">Transferase</keyword>
<keyword id="KW-0812">Transmembrane</keyword>
<keyword id="KW-1133">Transmembrane helix</keyword>
<name>GLT12_HUMAN</name>
<comment type="function">
    <text>Catalyzes the initial reaction in O-linked oligosaccharide biosynthesis, the transfer of an N-acetyl-D-galactosamine residue to a serine or threonine residue on the protein receptor. Has activity toward non-glycosylated peptides such as Muc5AC, Muc1a and EA2, and no detectable activity with Muc2 and Muc7. Displays enzymatic activity toward the Gal-NAc-Muc5AC glycopeptide, but no detectable activity to mono-GalNAc-glycosylated Muc1a, Muc2, Muc7 and EA2. May play an important role in the initial step of mucin-type oligosaccharide biosynthesis in digestive organs.</text>
</comment>
<comment type="catalytic activity">
    <reaction evidence="5">
        <text>L-seryl-[protein] + UDP-N-acetyl-alpha-D-galactosamine = a 3-O-[N-acetyl-alpha-D-galactosaminyl]-L-seryl-[protein] + UDP + H(+)</text>
        <dbReference type="Rhea" id="RHEA:23956"/>
        <dbReference type="Rhea" id="RHEA-COMP:9863"/>
        <dbReference type="Rhea" id="RHEA-COMP:12788"/>
        <dbReference type="ChEBI" id="CHEBI:15378"/>
        <dbReference type="ChEBI" id="CHEBI:29999"/>
        <dbReference type="ChEBI" id="CHEBI:53604"/>
        <dbReference type="ChEBI" id="CHEBI:58223"/>
        <dbReference type="ChEBI" id="CHEBI:67138"/>
        <dbReference type="EC" id="2.4.1.41"/>
    </reaction>
</comment>
<comment type="catalytic activity">
    <reaction evidence="5">
        <text>L-threonyl-[protein] + UDP-N-acetyl-alpha-D-galactosamine = a 3-O-[N-acetyl-alpha-D-galactosaminyl]-L-threonyl-[protein] + UDP + H(+)</text>
        <dbReference type="Rhea" id="RHEA:52424"/>
        <dbReference type="Rhea" id="RHEA-COMP:11060"/>
        <dbReference type="Rhea" id="RHEA-COMP:11689"/>
        <dbReference type="ChEBI" id="CHEBI:15378"/>
        <dbReference type="ChEBI" id="CHEBI:30013"/>
        <dbReference type="ChEBI" id="CHEBI:58223"/>
        <dbReference type="ChEBI" id="CHEBI:67138"/>
        <dbReference type="ChEBI" id="CHEBI:87075"/>
        <dbReference type="EC" id="2.4.1.41"/>
    </reaction>
</comment>
<comment type="cofactor">
    <cofactor evidence="1">
        <name>Mn(2+)</name>
        <dbReference type="ChEBI" id="CHEBI:29035"/>
    </cofactor>
</comment>
<comment type="pathway">
    <text>Protein modification; protein glycosylation.</text>
</comment>
<comment type="interaction">
    <interactant intactId="EBI-8995375">
        <id>Q8IXK2</id>
    </interactant>
    <interactant intactId="EBI-1223791">
        <id>P02790</id>
        <label>HPX</label>
    </interactant>
    <organismsDiffer>false</organismsDiffer>
    <experiments>3</experiments>
</comment>
<comment type="subcellular location">
    <subcellularLocation>
        <location evidence="1">Golgi apparatus membrane</location>
        <topology evidence="1">Single-pass type II membrane protein</topology>
    </subcellularLocation>
</comment>
<comment type="alternative products">
    <event type="alternative splicing"/>
    <isoform>
        <id>Q8IXK2-1</id>
        <name>1</name>
        <sequence type="displayed"/>
    </isoform>
    <isoform>
        <id>Q8IXK2-2</id>
        <name>2</name>
        <sequence type="described" ref="VSP_011217"/>
    </isoform>
</comment>
<comment type="tissue specificity">
    <text evidence="5">Widely expressed at different levels of expression. Highly expressed in digestive organs such as small intestine, stomach, pancreas and colon. Expressed at intermediate level in testis, thyroid gland and spleen. Weakly expressed in whole brain, cerebral cortex, cerebellum, fetal brain, bone marrow, thymus, leukocytes, heart, skeletal muscle, liver, lung, esophagus, kidney, adrenal gland, mammary gland, uterus, placenta, ovary and prostate.</text>
</comment>
<comment type="domain">
    <text evidence="1">There are two conserved domains in the glycosyltransferase region: the N-terminal domain (domain A, also called GT1 motif), which is probably involved in manganese coordination and substrate binding and the C-terminal domain (domain B, also called Gal/GalNAc-T motif), which is probably involved in catalytic reaction and UDP-Gal binding.</text>
</comment>
<comment type="domain">
    <text evidence="1">The ricin B-type lectin domain binds to GalNAc and contributes to the glycopeptide specificity.</text>
</comment>
<comment type="disease" evidence="6 7 8">
    <disease id="DI-02924">
        <name>Colorectal cancer 1</name>
        <acronym>CRCS1</acronym>
        <description>A complex disease characterized by malignant lesions arising from the inner wall of the large intestine (the colon) and the rectum. Genetic alterations are often associated with progression from premalignant lesion (adenoma) to invasive adenocarcinoma. Risk factors for cancer of the colon and rectum include colon polyps, long-standing ulcerative colitis, and genetic family history.</description>
        <dbReference type="MIM" id="608812"/>
    </disease>
    <text evidence="8">Disease susceptibility is associated with variants affecting the gene represented in this entry. The role of GALNT12 in colon cancer susceptibility is however subject to discussion: studies on 103 probants with colorectal cancer 1 (CRCS1) suggest that it does not act as a major contributor of CRCS1 (PubMed:24115450).</text>
</comment>
<comment type="similarity">
    <text evidence="10">Belongs to the glycosyltransferase 2 family. GalNAc-T subfamily.</text>
</comment>
<comment type="sequence caution" evidence="10">
    <conflict type="erroneous initiation">
        <sequence resource="EMBL-CDS" id="BAB15027"/>
    </conflict>
</comment>
<comment type="online information" name="Functional Glycomics Gateway - GTase">
    <link uri="http://www.functionalglycomics.org/glycomics/molecule/jsp/glycoEnzyme/viewGlycoEnzyme.jsp?gbpId=gt_hum_495"/>
    <text>Polypeptide N-acetylgalactosaminyltransferase 12</text>
</comment>
<organism>
    <name type="scientific">Homo sapiens</name>
    <name type="common">Human</name>
    <dbReference type="NCBI Taxonomy" id="9606"/>
    <lineage>
        <taxon>Eukaryota</taxon>
        <taxon>Metazoa</taxon>
        <taxon>Chordata</taxon>
        <taxon>Craniata</taxon>
        <taxon>Vertebrata</taxon>
        <taxon>Euteleostomi</taxon>
        <taxon>Mammalia</taxon>
        <taxon>Eutheria</taxon>
        <taxon>Euarchontoglires</taxon>
        <taxon>Primates</taxon>
        <taxon>Haplorrhini</taxon>
        <taxon>Catarrhini</taxon>
        <taxon>Hominidae</taxon>
        <taxon>Homo</taxon>
    </lineage>
</organism>
<protein>
    <recommendedName>
        <fullName>Polypeptide N-acetylgalactosaminyltransferase 12</fullName>
        <ecNumber>2.4.1.41</ecNumber>
    </recommendedName>
    <alternativeName>
        <fullName>Polypeptide GalNAc transferase 12</fullName>
        <shortName>GalNAc-T12</shortName>
        <shortName>pp-GaNTase 12</shortName>
    </alternativeName>
    <alternativeName>
        <fullName>Protein-UDP acetylgalactosaminyltransferase 12</fullName>
    </alternativeName>
    <alternativeName>
        <fullName>UDP-GalNAc:polypeptide N-acetylgalactosaminyltransferase 12</fullName>
    </alternativeName>
</protein>
<accession>Q8IXK2</accession>
<accession>Q5TCF7</accession>
<accession>Q8NG54</accession>
<accession>Q96CT9</accession>
<accession>Q9H771</accession>
<feature type="chain" id="PRO_0000059128" description="Polypeptide N-acetylgalactosaminyltransferase 12">
    <location>
        <begin position="1"/>
        <end position="581"/>
    </location>
</feature>
<feature type="topological domain" description="Cytoplasmic" evidence="2">
    <location>
        <begin position="1"/>
        <end position="19"/>
    </location>
</feature>
<feature type="transmembrane region" description="Helical; Signal-anchor for type II membrane protein" evidence="2">
    <location>
        <begin position="20"/>
        <end position="37"/>
    </location>
</feature>
<feature type="topological domain" description="Lumenal" evidence="2">
    <location>
        <begin position="38"/>
        <end position="581"/>
    </location>
</feature>
<feature type="domain" description="Ricin B-type lectin" evidence="3">
    <location>
        <begin position="445"/>
        <end position="577"/>
    </location>
</feature>
<feature type="region of interest" description="Disordered" evidence="4">
    <location>
        <begin position="43"/>
        <end position="67"/>
    </location>
</feature>
<feature type="region of interest" description="Catalytic subdomain A">
    <location>
        <begin position="135"/>
        <end position="244"/>
    </location>
</feature>
<feature type="region of interest" description="Catalytic subdomain B">
    <location>
        <begin position="304"/>
        <end position="366"/>
    </location>
</feature>
<feature type="binding site" evidence="1">
    <location>
        <position position="176"/>
    </location>
    <ligand>
        <name>substrate</name>
    </ligand>
</feature>
<feature type="binding site" evidence="1">
    <location>
        <position position="205"/>
    </location>
    <ligand>
        <name>substrate</name>
    </ligand>
</feature>
<feature type="binding site" evidence="1">
    <location>
        <position position="228"/>
    </location>
    <ligand>
        <name>Mn(2+)</name>
        <dbReference type="ChEBI" id="CHEBI:29035"/>
    </ligand>
</feature>
<feature type="binding site" evidence="1">
    <location>
        <position position="230"/>
    </location>
    <ligand>
        <name>Mn(2+)</name>
        <dbReference type="ChEBI" id="CHEBI:29035"/>
    </ligand>
</feature>
<feature type="binding site" evidence="1">
    <location>
        <position position="335"/>
    </location>
    <ligand>
        <name>substrate</name>
    </ligand>
</feature>
<feature type="binding site" evidence="1">
    <location>
        <position position="363"/>
    </location>
    <ligand>
        <name>Mn(2+)</name>
        <dbReference type="ChEBI" id="CHEBI:29035"/>
    </ligand>
</feature>
<feature type="binding site" evidence="1">
    <location>
        <position position="371"/>
    </location>
    <ligand>
        <name>substrate</name>
    </ligand>
</feature>
<feature type="disulfide bond" evidence="3">
    <location>
        <begin position="125"/>
        <end position="358"/>
    </location>
</feature>
<feature type="disulfide bond" evidence="3">
    <location>
        <begin position="349"/>
        <end position="422"/>
    </location>
</feature>
<feature type="disulfide bond" evidence="3">
    <location>
        <begin position="458"/>
        <end position="479"/>
    </location>
</feature>
<feature type="disulfide bond" evidence="3">
    <location>
        <begin position="506"/>
        <end position="521"/>
    </location>
</feature>
<feature type="disulfide bond" evidence="3">
    <location>
        <begin position="547"/>
        <end position="566"/>
    </location>
</feature>
<feature type="splice variant" id="VSP_011217" description="In isoform 2." evidence="9">
    <location>
        <begin position="1"/>
        <end position="309"/>
    </location>
</feature>
<feature type="sequence variant" id="VAR_064352" description="In dbSNP:rs1356894484." evidence="6">
    <original>G</original>
    <variation>E</variation>
    <location>
        <position position="3"/>
    </location>
</feature>
<feature type="sequence variant" id="VAR_064353" description="In dbSNP:rs10987768." evidence="6">
    <original>G</original>
    <variation>R</variation>
    <location>
        <position position="46"/>
    </location>
</feature>
<feature type="sequence variant" id="VAR_064354" description="In dbSNP:rs1137654." evidence="5 6">
    <original>E</original>
    <variation>V</variation>
    <location>
        <position position="119"/>
    </location>
</feature>
<feature type="sequence variant" id="VAR_064355" description="In dbSNP:rs41306504." evidence="6">
    <original>D</original>
    <variation>N</variation>
    <location>
        <position position="261"/>
    </location>
</feature>
<feature type="sequence variant" id="VAR_064356" description="In dbSNP:rs367645298." evidence="6">
    <original>G</original>
    <variation>R</variation>
    <location>
        <position position="272"/>
    </location>
</feature>
<feature type="sequence variant" id="VAR_064357" description="In CRCS1; germline mutation; partial loss of activity; dbSNP:rs149726976." evidence="6">
    <original>R</original>
    <variation>W</variation>
    <location>
        <position position="297"/>
    </location>
</feature>
<feature type="sequence variant" id="VAR_064358" description="In CRCS1; germline mutation; reduction of activity; dbSNP:rs145236923." evidence="6 7">
    <original>D</original>
    <variation>N</variation>
    <location>
        <position position="303"/>
    </location>
</feature>
<feature type="sequence variant" id="VAR_064359" description="In CRCS1; somatic mutation; loss of activity." evidence="6">
    <original>E</original>
    <variation>D</variation>
    <location>
        <position position="341"/>
    </location>
</feature>
<feature type="sequence variant" id="VAR_064360" description="In CRCS1; germline mutation; partial loss of activity; dbSNP:rs920049418." evidence="6">
    <original>R</original>
    <variation>H</variation>
    <location>
        <position position="373"/>
    </location>
</feature>
<feature type="sequence variant" id="VAR_064361" description="In CRCS1; germline mutation; loss of activity; dbSNP:rs868590153." evidence="6">
    <original>R</original>
    <variation>H</variation>
    <location>
        <position position="382"/>
    </location>
</feature>
<feature type="sequence variant" id="VAR_068509" description="In CRCS1; dbSNP:rs1272530441." evidence="7">
    <original>Y</original>
    <variation>C</variation>
    <location>
        <position position="396"/>
    </location>
</feature>
<feature type="sequence variant" id="VAR_064362" description="In CRCS1; somatic mutation; loss of activity." evidence="6">
    <original>C</original>
    <variation>F</variation>
    <location>
        <position position="479"/>
    </location>
</feature>
<feature type="sequence variant" id="VAR_064363" description="In CRCS1; germline mutation; loss of activity; dbSNP:rs267606840." evidence="6">
    <original>T</original>
    <variation>M</variation>
    <location>
        <position position="491"/>
    </location>
</feature>
<feature type="sequence variant" id="VAR_064364" description="In dbSNP:rs1285871027." evidence="6">
    <original>R</original>
    <variation>K</variation>
    <location>
        <position position="552"/>
    </location>
</feature>
<feature type="strand" evidence="11">
    <location>
        <begin position="61"/>
        <end position="65"/>
    </location>
</feature>
<feature type="turn" evidence="11">
    <location>
        <begin position="75"/>
        <end position="78"/>
    </location>
</feature>
<feature type="helix" evidence="11">
    <location>
        <begin position="88"/>
        <end position="101"/>
    </location>
</feature>
<feature type="helix" evidence="11">
    <location>
        <begin position="105"/>
        <end position="108"/>
    </location>
</feature>
<feature type="helix" evidence="11">
    <location>
        <begin position="123"/>
        <end position="127"/>
    </location>
</feature>
<feature type="turn" evidence="11">
    <location>
        <begin position="132"/>
        <end position="134"/>
    </location>
</feature>
<feature type="strand" evidence="11">
    <location>
        <begin position="138"/>
        <end position="146"/>
    </location>
</feature>
<feature type="helix" evidence="11">
    <location>
        <begin position="149"/>
        <end position="162"/>
    </location>
</feature>
<feature type="helix" evidence="11">
    <location>
        <begin position="165"/>
        <end position="167"/>
    </location>
</feature>
<feature type="strand" evidence="11">
    <location>
        <begin position="168"/>
        <end position="175"/>
    </location>
</feature>
<feature type="helix" evidence="11">
    <location>
        <begin position="181"/>
        <end position="183"/>
    </location>
</feature>
<feature type="helix" evidence="11">
    <location>
        <begin position="185"/>
        <end position="191"/>
    </location>
</feature>
<feature type="strand" evidence="11">
    <location>
        <begin position="197"/>
        <end position="201"/>
    </location>
</feature>
<feature type="helix" evidence="11">
    <location>
        <begin position="207"/>
        <end position="218"/>
    </location>
</feature>
<feature type="strand" evidence="11">
    <location>
        <begin position="221"/>
        <end position="226"/>
    </location>
</feature>
<feature type="strand" evidence="11">
    <location>
        <begin position="229"/>
        <end position="233"/>
    </location>
</feature>
<feature type="helix" evidence="11">
    <location>
        <begin position="238"/>
        <end position="247"/>
    </location>
</feature>
<feature type="strand" evidence="11">
    <location>
        <begin position="251"/>
        <end position="260"/>
    </location>
</feature>
<feature type="turn" evidence="11">
    <location>
        <begin position="262"/>
        <end position="264"/>
    </location>
</feature>
<feature type="strand" evidence="11">
    <location>
        <begin position="276"/>
        <end position="279"/>
    </location>
</feature>
<feature type="strand" evidence="11">
    <location>
        <begin position="285"/>
        <end position="288"/>
    </location>
</feature>
<feature type="helix" evidence="11">
    <location>
        <begin position="292"/>
        <end position="297"/>
    </location>
</feature>
<feature type="strand" evidence="11">
    <location>
        <begin position="315"/>
        <end position="318"/>
    </location>
</feature>
<feature type="helix" evidence="11">
    <location>
        <begin position="319"/>
        <end position="324"/>
    </location>
</feature>
<feature type="strand" evidence="11">
    <location>
        <begin position="334"/>
        <end position="337"/>
    </location>
</feature>
<feature type="helix" evidence="11">
    <location>
        <begin position="338"/>
        <end position="348"/>
    </location>
</feature>
<feature type="strand" evidence="11">
    <location>
        <begin position="352"/>
        <end position="364"/>
    </location>
</feature>
<feature type="helix" evidence="11">
    <location>
        <begin position="376"/>
        <end position="387"/>
    </location>
</feature>
<feature type="helix" evidence="11">
    <location>
        <begin position="389"/>
        <end position="391"/>
    </location>
</feature>
<feature type="helix" evidence="11">
    <location>
        <begin position="392"/>
        <end position="398"/>
    </location>
</feature>
<feature type="helix" evidence="11">
    <location>
        <begin position="400"/>
        <end position="404"/>
    </location>
</feature>
<feature type="helix" evidence="11">
    <location>
        <begin position="411"/>
        <end position="419"/>
    </location>
</feature>
<feature type="helix" evidence="11">
    <location>
        <begin position="425"/>
        <end position="431"/>
    </location>
</feature>
<feature type="strand" evidence="11">
    <location>
        <begin position="445"/>
        <end position="454"/>
    </location>
</feature>
<feature type="strand" evidence="11">
    <location>
        <begin position="457"/>
        <end position="460"/>
    </location>
</feature>
<feature type="strand" evidence="11">
    <location>
        <begin position="464"/>
        <end position="467"/>
    </location>
</feature>
<feature type="strand" evidence="11">
    <location>
        <begin position="475"/>
        <end position="478"/>
    </location>
</feature>
<feature type="helix" evidence="11">
    <location>
        <begin position="484"/>
        <end position="486"/>
    </location>
</feature>
<feature type="strand" evidence="11">
    <location>
        <begin position="488"/>
        <end position="490"/>
    </location>
</feature>
<feature type="strand" evidence="11">
    <location>
        <begin position="496"/>
        <end position="498"/>
    </location>
</feature>
<feature type="strand" evidence="11">
    <location>
        <begin position="500"/>
        <end position="503"/>
    </location>
</feature>
<feature type="strand" evidence="11">
    <location>
        <begin position="505"/>
        <end position="508"/>
    </location>
</feature>
<feature type="strand" evidence="11">
    <location>
        <begin position="517"/>
        <end position="520"/>
    </location>
</feature>
<feature type="helix" evidence="11">
    <location>
        <begin position="527"/>
        <end position="529"/>
    </location>
</feature>
<feature type="strand" evidence="11">
    <location>
        <begin position="531"/>
        <end position="533"/>
    </location>
</feature>
<feature type="strand" evidence="11">
    <location>
        <begin position="537"/>
        <end position="541"/>
    </location>
</feature>
<feature type="turn" evidence="11">
    <location>
        <begin position="542"/>
        <end position="545"/>
    </location>
</feature>
<feature type="strand" evidence="11">
    <location>
        <begin position="546"/>
        <end position="551"/>
    </location>
</feature>
<feature type="turn" evidence="11">
    <location>
        <begin position="554"/>
        <end position="556"/>
    </location>
</feature>
<feature type="strand" evidence="11">
    <location>
        <begin position="560"/>
        <end position="564"/>
    </location>
</feature>
<feature type="helix" evidence="11">
    <location>
        <begin position="570"/>
        <end position="572"/>
    </location>
</feature>
<feature type="strand" evidence="11">
    <location>
        <begin position="573"/>
        <end position="579"/>
    </location>
</feature>
<dbReference type="EC" id="2.4.1.41"/>
<dbReference type="EMBL" id="AB078146">
    <property type="protein sequence ID" value="BAC07181.1"/>
    <property type="molecule type" value="mRNA"/>
</dbReference>
<dbReference type="EMBL" id="AJ132365">
    <property type="protein sequence ID" value="CAC80100.2"/>
    <property type="molecule type" value="mRNA"/>
</dbReference>
<dbReference type="EMBL" id="AL136084">
    <property type="status" value="NOT_ANNOTATED_CDS"/>
    <property type="molecule type" value="Genomic_DNA"/>
</dbReference>
<dbReference type="EMBL" id="BC013945">
    <property type="protein sequence ID" value="AAH13945.1"/>
    <property type="molecule type" value="mRNA"/>
</dbReference>
<dbReference type="EMBL" id="AK024865">
    <property type="protein sequence ID" value="BAB15027.1"/>
    <property type="status" value="ALT_INIT"/>
    <property type="molecule type" value="mRNA"/>
</dbReference>
<dbReference type="CCDS" id="CCDS6737.1">
    <molecule id="Q8IXK2-1"/>
</dbReference>
<dbReference type="RefSeq" id="NP_078918.3">
    <molecule id="Q8IXK2-1"/>
    <property type="nucleotide sequence ID" value="NM_024642.4"/>
</dbReference>
<dbReference type="RefSeq" id="XP_006717350.1">
    <property type="nucleotide sequence ID" value="XM_006717287.1"/>
</dbReference>
<dbReference type="PDB" id="6PXU">
    <property type="method" value="X-ray"/>
    <property type="resolution" value="2.01 A"/>
    <property type="chains" value="A/B=39-581"/>
</dbReference>
<dbReference type="PDBsum" id="6PXU"/>
<dbReference type="SMR" id="Q8IXK2"/>
<dbReference type="BioGRID" id="122816">
    <property type="interactions" value="120"/>
</dbReference>
<dbReference type="FunCoup" id="Q8IXK2">
    <property type="interactions" value="763"/>
</dbReference>
<dbReference type="IntAct" id="Q8IXK2">
    <property type="interactions" value="81"/>
</dbReference>
<dbReference type="MINT" id="Q8IXK2"/>
<dbReference type="STRING" id="9606.ENSP00000364150"/>
<dbReference type="CAZy" id="CBM13">
    <property type="family name" value="Carbohydrate-Binding Module Family 13"/>
</dbReference>
<dbReference type="CAZy" id="GT27">
    <property type="family name" value="Glycosyltransferase Family 27"/>
</dbReference>
<dbReference type="UniLectin" id="Q8IXK2"/>
<dbReference type="GlyGen" id="Q8IXK2">
    <property type="glycosylation" value="3 sites, 1 O-linked glycan (3 sites)"/>
</dbReference>
<dbReference type="iPTMnet" id="Q8IXK2"/>
<dbReference type="PhosphoSitePlus" id="Q8IXK2"/>
<dbReference type="SwissPalm" id="Q8IXK2"/>
<dbReference type="BioMuta" id="GALNT12"/>
<dbReference type="DMDM" id="84028209"/>
<dbReference type="jPOST" id="Q8IXK2"/>
<dbReference type="MassIVE" id="Q8IXK2"/>
<dbReference type="PaxDb" id="9606-ENSP00000364150"/>
<dbReference type="PeptideAtlas" id="Q8IXK2"/>
<dbReference type="ProteomicsDB" id="71019">
    <molecule id="Q8IXK2-1"/>
</dbReference>
<dbReference type="ProteomicsDB" id="71020">
    <molecule id="Q8IXK2-2"/>
</dbReference>
<dbReference type="Pumba" id="Q8IXK2"/>
<dbReference type="Antibodypedia" id="29005">
    <property type="antibodies" value="88 antibodies from 14 providers"/>
</dbReference>
<dbReference type="DNASU" id="79695"/>
<dbReference type="Ensembl" id="ENST00000375011.4">
    <molecule id="Q8IXK2-1"/>
    <property type="protein sequence ID" value="ENSP00000364150.3"/>
    <property type="gene ID" value="ENSG00000119514.7"/>
</dbReference>
<dbReference type="GeneID" id="79695"/>
<dbReference type="KEGG" id="hsa:79695"/>
<dbReference type="MANE-Select" id="ENST00000375011.4">
    <property type="protein sequence ID" value="ENSP00000364150.3"/>
    <property type="RefSeq nucleotide sequence ID" value="NM_024642.5"/>
    <property type="RefSeq protein sequence ID" value="NP_078918.3"/>
</dbReference>
<dbReference type="UCSC" id="uc004ayz.3">
    <molecule id="Q8IXK2-1"/>
    <property type="organism name" value="human"/>
</dbReference>
<dbReference type="AGR" id="HGNC:19877"/>
<dbReference type="CTD" id="79695"/>
<dbReference type="DisGeNET" id="79695"/>
<dbReference type="GeneCards" id="GALNT12"/>
<dbReference type="HGNC" id="HGNC:19877">
    <property type="gene designation" value="GALNT12"/>
</dbReference>
<dbReference type="HPA" id="ENSG00000119514">
    <property type="expression patterns" value="Tissue enhanced (epididymis, intestine, stomach)"/>
</dbReference>
<dbReference type="MalaCards" id="GALNT12"/>
<dbReference type="MIM" id="608812">
    <property type="type" value="phenotype"/>
</dbReference>
<dbReference type="MIM" id="610290">
    <property type="type" value="gene"/>
</dbReference>
<dbReference type="neXtProt" id="NX_Q8IXK2"/>
<dbReference type="OpenTargets" id="ENSG00000119514"/>
<dbReference type="PharmGKB" id="PA134929192"/>
<dbReference type="VEuPathDB" id="HostDB:ENSG00000119514"/>
<dbReference type="eggNOG" id="KOG3736">
    <property type="taxonomic scope" value="Eukaryota"/>
</dbReference>
<dbReference type="GeneTree" id="ENSGT00940000157173"/>
<dbReference type="HOGENOM" id="CLU_013477_0_3_1"/>
<dbReference type="InParanoid" id="Q8IXK2"/>
<dbReference type="OMA" id="SKSYFHY"/>
<dbReference type="OrthoDB" id="416652at2759"/>
<dbReference type="PAN-GO" id="Q8IXK2">
    <property type="GO annotations" value="3 GO annotations based on evolutionary models"/>
</dbReference>
<dbReference type="PhylomeDB" id="Q8IXK2"/>
<dbReference type="TreeFam" id="TF352660"/>
<dbReference type="BRENDA" id="2.4.1.41">
    <property type="organism ID" value="2681"/>
</dbReference>
<dbReference type="PathwayCommons" id="Q8IXK2"/>
<dbReference type="Reactome" id="R-HSA-5083636">
    <property type="pathway name" value="Defective GALNT12 causes CRCS1"/>
</dbReference>
<dbReference type="Reactome" id="R-HSA-913709">
    <property type="pathway name" value="O-linked glycosylation of mucins"/>
</dbReference>
<dbReference type="SignaLink" id="Q8IXK2"/>
<dbReference type="UniPathway" id="UPA00378"/>
<dbReference type="BioGRID-ORCS" id="79695">
    <property type="hits" value="10 hits in 1155 CRISPR screens"/>
</dbReference>
<dbReference type="ChiTaRS" id="GALNT12">
    <property type="organism name" value="human"/>
</dbReference>
<dbReference type="GenomeRNAi" id="79695"/>
<dbReference type="Pharos" id="Q8IXK2">
    <property type="development level" value="Tbio"/>
</dbReference>
<dbReference type="PRO" id="PR:Q8IXK2"/>
<dbReference type="Proteomes" id="UP000005640">
    <property type="component" value="Chromosome 9"/>
</dbReference>
<dbReference type="RNAct" id="Q8IXK2">
    <property type="molecule type" value="protein"/>
</dbReference>
<dbReference type="Bgee" id="ENSG00000119514">
    <property type="expression patterns" value="Expressed in palpebral conjunctiva and 153 other cell types or tissues"/>
</dbReference>
<dbReference type="ExpressionAtlas" id="Q8IXK2">
    <property type="expression patterns" value="baseline and differential"/>
</dbReference>
<dbReference type="GO" id="GO:0005794">
    <property type="term" value="C:Golgi apparatus"/>
    <property type="evidence" value="ECO:0000318"/>
    <property type="project" value="GO_Central"/>
</dbReference>
<dbReference type="GO" id="GO:0000139">
    <property type="term" value="C:Golgi membrane"/>
    <property type="evidence" value="ECO:0000304"/>
    <property type="project" value="Reactome"/>
</dbReference>
<dbReference type="GO" id="GO:0030246">
    <property type="term" value="F:carbohydrate binding"/>
    <property type="evidence" value="ECO:0007669"/>
    <property type="project" value="UniProtKB-KW"/>
</dbReference>
<dbReference type="GO" id="GO:0046872">
    <property type="term" value="F:metal ion binding"/>
    <property type="evidence" value="ECO:0007669"/>
    <property type="project" value="UniProtKB-KW"/>
</dbReference>
<dbReference type="GO" id="GO:0004653">
    <property type="term" value="F:polypeptide N-acetylgalactosaminyltransferase activity"/>
    <property type="evidence" value="ECO:0000318"/>
    <property type="project" value="GO_Central"/>
</dbReference>
<dbReference type="GO" id="GO:0016266">
    <property type="term" value="P:O-glycan processing"/>
    <property type="evidence" value="ECO:0000304"/>
    <property type="project" value="Reactome"/>
</dbReference>
<dbReference type="GO" id="GO:0006493">
    <property type="term" value="P:protein O-linked glycosylation"/>
    <property type="evidence" value="ECO:0000318"/>
    <property type="project" value="GO_Central"/>
</dbReference>
<dbReference type="CDD" id="cd23471">
    <property type="entry name" value="beta-trefoil_Ricin_GALNT12"/>
    <property type="match status" value="1"/>
</dbReference>
<dbReference type="CDD" id="cd02510">
    <property type="entry name" value="pp-GalNAc-T"/>
    <property type="match status" value="1"/>
</dbReference>
<dbReference type="FunFam" id="2.80.10.50:FF:000057">
    <property type="entry name" value="Polypeptide N-acetylgalactosaminyltransferase"/>
    <property type="match status" value="1"/>
</dbReference>
<dbReference type="FunFam" id="3.90.550.10:FF:000021">
    <property type="entry name" value="Polypeptide N-acetylgalactosaminyltransferase"/>
    <property type="match status" value="1"/>
</dbReference>
<dbReference type="Gene3D" id="2.80.10.50">
    <property type="match status" value="1"/>
</dbReference>
<dbReference type="Gene3D" id="3.90.550.10">
    <property type="entry name" value="Spore Coat Polysaccharide Biosynthesis Protein SpsA, Chain A"/>
    <property type="match status" value="1"/>
</dbReference>
<dbReference type="InterPro" id="IPR045885">
    <property type="entry name" value="GalNAc-T"/>
</dbReference>
<dbReference type="InterPro" id="IPR001173">
    <property type="entry name" value="Glyco_trans_2-like"/>
</dbReference>
<dbReference type="InterPro" id="IPR029044">
    <property type="entry name" value="Nucleotide-diphossugar_trans"/>
</dbReference>
<dbReference type="InterPro" id="IPR035992">
    <property type="entry name" value="Ricin_B-like_lectins"/>
</dbReference>
<dbReference type="InterPro" id="IPR000772">
    <property type="entry name" value="Ricin_B_lectin"/>
</dbReference>
<dbReference type="PANTHER" id="PTHR11675">
    <property type="entry name" value="N-ACETYLGALACTOSAMINYLTRANSFERASE"/>
    <property type="match status" value="1"/>
</dbReference>
<dbReference type="PANTHER" id="PTHR11675:SF18">
    <property type="entry name" value="POLYPEPTIDE N-ACETYLGALACTOSAMINYLTRANSFERASE 12"/>
    <property type="match status" value="1"/>
</dbReference>
<dbReference type="Pfam" id="PF00535">
    <property type="entry name" value="Glycos_transf_2"/>
    <property type="match status" value="1"/>
</dbReference>
<dbReference type="Pfam" id="PF00652">
    <property type="entry name" value="Ricin_B_lectin"/>
    <property type="match status" value="1"/>
</dbReference>
<dbReference type="SMART" id="SM00458">
    <property type="entry name" value="RICIN"/>
    <property type="match status" value="1"/>
</dbReference>
<dbReference type="SUPFAM" id="SSF53448">
    <property type="entry name" value="Nucleotide-diphospho-sugar transferases"/>
    <property type="match status" value="1"/>
</dbReference>
<dbReference type="SUPFAM" id="SSF50370">
    <property type="entry name" value="Ricin B-like lectins"/>
    <property type="match status" value="1"/>
</dbReference>
<dbReference type="PROSITE" id="PS50231">
    <property type="entry name" value="RICIN_B_LECTIN"/>
    <property type="match status" value="1"/>
</dbReference>
<gene>
    <name type="primary">GALNT12</name>
</gene>
<reference key="1">
    <citation type="journal article" date="2002" name="FEBS Lett.">
        <title>Molecular cloning and characterization of a novel member of the UDP-GalNAc:polypeptide N-acetylgalactosaminyltransferase family, pp-GalNAc-T12(1).</title>
        <authorList>
            <person name="Guo J.-M."/>
            <person name="Zhang Y."/>
            <person name="Cheng L."/>
            <person name="Iwasaki H."/>
            <person name="Wang H."/>
            <person name="Kubota T."/>
            <person name="Tachibana K."/>
            <person name="Narimatsu H."/>
        </authorList>
    </citation>
    <scope>NUCLEOTIDE SEQUENCE [MRNA] (ISOFORM 1)</scope>
    <scope>ENZYME ACTIVITY</scope>
    <scope>TISSUE SPECIFICITY</scope>
    <scope>VARIANT VAL-119</scope>
    <source>
        <tissue>Lung</tissue>
    </source>
</reference>
<reference key="2">
    <citation type="submission" date="1999-01" db="EMBL/GenBank/DDBJ databases">
        <authorList>
            <person name="Bennett E.P."/>
        </authorList>
    </citation>
    <scope>NUCLEOTIDE SEQUENCE [MRNA] (ISOFORM 1)</scope>
</reference>
<reference key="3">
    <citation type="journal article" date="2004" name="Nature">
        <title>DNA sequence and analysis of human chromosome 9.</title>
        <authorList>
            <person name="Humphray S.J."/>
            <person name="Oliver K."/>
            <person name="Hunt A.R."/>
            <person name="Plumb R.W."/>
            <person name="Loveland J.E."/>
            <person name="Howe K.L."/>
            <person name="Andrews T.D."/>
            <person name="Searle S."/>
            <person name="Hunt S.E."/>
            <person name="Scott C.E."/>
            <person name="Jones M.C."/>
            <person name="Ainscough R."/>
            <person name="Almeida J.P."/>
            <person name="Ambrose K.D."/>
            <person name="Ashwell R.I.S."/>
            <person name="Babbage A.K."/>
            <person name="Babbage S."/>
            <person name="Bagguley C.L."/>
            <person name="Bailey J."/>
            <person name="Banerjee R."/>
            <person name="Barker D.J."/>
            <person name="Barlow K.F."/>
            <person name="Bates K."/>
            <person name="Beasley H."/>
            <person name="Beasley O."/>
            <person name="Bird C.P."/>
            <person name="Bray-Allen S."/>
            <person name="Brown A.J."/>
            <person name="Brown J.Y."/>
            <person name="Burford D."/>
            <person name="Burrill W."/>
            <person name="Burton J."/>
            <person name="Carder C."/>
            <person name="Carter N.P."/>
            <person name="Chapman J.C."/>
            <person name="Chen Y."/>
            <person name="Clarke G."/>
            <person name="Clark S.Y."/>
            <person name="Clee C.M."/>
            <person name="Clegg S."/>
            <person name="Collier R.E."/>
            <person name="Corby N."/>
            <person name="Crosier M."/>
            <person name="Cummings A.T."/>
            <person name="Davies J."/>
            <person name="Dhami P."/>
            <person name="Dunn M."/>
            <person name="Dutta I."/>
            <person name="Dyer L.W."/>
            <person name="Earthrowl M.E."/>
            <person name="Faulkner L."/>
            <person name="Fleming C.J."/>
            <person name="Frankish A."/>
            <person name="Frankland J.A."/>
            <person name="French L."/>
            <person name="Fricker D.G."/>
            <person name="Garner P."/>
            <person name="Garnett J."/>
            <person name="Ghori J."/>
            <person name="Gilbert J.G.R."/>
            <person name="Glison C."/>
            <person name="Grafham D.V."/>
            <person name="Gribble S."/>
            <person name="Griffiths C."/>
            <person name="Griffiths-Jones S."/>
            <person name="Grocock R."/>
            <person name="Guy J."/>
            <person name="Hall R.E."/>
            <person name="Hammond S."/>
            <person name="Harley J.L."/>
            <person name="Harrison E.S.I."/>
            <person name="Hart E.A."/>
            <person name="Heath P.D."/>
            <person name="Henderson C.D."/>
            <person name="Hopkins B.L."/>
            <person name="Howard P.J."/>
            <person name="Howden P.J."/>
            <person name="Huckle E."/>
            <person name="Johnson C."/>
            <person name="Johnson D."/>
            <person name="Joy A.A."/>
            <person name="Kay M."/>
            <person name="Keenan S."/>
            <person name="Kershaw J.K."/>
            <person name="Kimberley A.M."/>
            <person name="King A."/>
            <person name="Knights A."/>
            <person name="Laird G.K."/>
            <person name="Langford C."/>
            <person name="Lawlor S."/>
            <person name="Leongamornlert D.A."/>
            <person name="Leversha M."/>
            <person name="Lloyd C."/>
            <person name="Lloyd D.M."/>
            <person name="Lovell J."/>
            <person name="Martin S."/>
            <person name="Mashreghi-Mohammadi M."/>
            <person name="Matthews L."/>
            <person name="McLaren S."/>
            <person name="McLay K.E."/>
            <person name="McMurray A."/>
            <person name="Milne S."/>
            <person name="Nickerson T."/>
            <person name="Nisbett J."/>
            <person name="Nordsiek G."/>
            <person name="Pearce A.V."/>
            <person name="Peck A.I."/>
            <person name="Porter K.M."/>
            <person name="Pandian R."/>
            <person name="Pelan S."/>
            <person name="Phillimore B."/>
            <person name="Povey S."/>
            <person name="Ramsey Y."/>
            <person name="Rand V."/>
            <person name="Scharfe M."/>
            <person name="Sehra H.K."/>
            <person name="Shownkeen R."/>
            <person name="Sims S.K."/>
            <person name="Skuce C.D."/>
            <person name="Smith M."/>
            <person name="Steward C.A."/>
            <person name="Swarbreck D."/>
            <person name="Sycamore N."/>
            <person name="Tester J."/>
            <person name="Thorpe A."/>
            <person name="Tracey A."/>
            <person name="Tromans A."/>
            <person name="Thomas D.W."/>
            <person name="Wall M."/>
            <person name="Wallis J.M."/>
            <person name="West A.P."/>
            <person name="Whitehead S.L."/>
            <person name="Willey D.L."/>
            <person name="Williams S.A."/>
            <person name="Wilming L."/>
            <person name="Wray P.W."/>
            <person name="Young L."/>
            <person name="Ashurst J.L."/>
            <person name="Coulson A."/>
            <person name="Blocker H."/>
            <person name="Durbin R.M."/>
            <person name="Sulston J.E."/>
            <person name="Hubbard T."/>
            <person name="Jackson M.J."/>
            <person name="Bentley D.R."/>
            <person name="Beck S."/>
            <person name="Rogers J."/>
            <person name="Dunham I."/>
        </authorList>
    </citation>
    <scope>NUCLEOTIDE SEQUENCE [LARGE SCALE GENOMIC DNA]</scope>
</reference>
<reference key="4">
    <citation type="journal article" date="2004" name="Genome Res.">
        <title>The status, quality, and expansion of the NIH full-length cDNA project: the Mammalian Gene Collection (MGC).</title>
        <authorList>
            <consortium name="The MGC Project Team"/>
        </authorList>
    </citation>
    <scope>NUCLEOTIDE SEQUENCE [LARGE SCALE MRNA] (ISOFORM 2)</scope>
    <source>
        <tissue>Bone marrow</tissue>
    </source>
</reference>
<reference key="5">
    <citation type="journal article" date="2004" name="Nat. Genet.">
        <title>Complete sequencing and characterization of 21,243 full-length human cDNAs.</title>
        <authorList>
            <person name="Ota T."/>
            <person name="Suzuki Y."/>
            <person name="Nishikawa T."/>
            <person name="Otsuki T."/>
            <person name="Sugiyama T."/>
            <person name="Irie R."/>
            <person name="Wakamatsu A."/>
            <person name="Hayashi K."/>
            <person name="Sato H."/>
            <person name="Nagai K."/>
            <person name="Kimura K."/>
            <person name="Makita H."/>
            <person name="Sekine M."/>
            <person name="Obayashi M."/>
            <person name="Nishi T."/>
            <person name="Shibahara T."/>
            <person name="Tanaka T."/>
            <person name="Ishii S."/>
            <person name="Yamamoto J."/>
            <person name="Saito K."/>
            <person name="Kawai Y."/>
            <person name="Isono Y."/>
            <person name="Nakamura Y."/>
            <person name="Nagahari K."/>
            <person name="Murakami K."/>
            <person name="Yasuda T."/>
            <person name="Iwayanagi T."/>
            <person name="Wagatsuma M."/>
            <person name="Shiratori A."/>
            <person name="Sudo H."/>
            <person name="Hosoiri T."/>
            <person name="Kaku Y."/>
            <person name="Kodaira H."/>
            <person name="Kondo H."/>
            <person name="Sugawara M."/>
            <person name="Takahashi M."/>
            <person name="Kanda K."/>
            <person name="Yokoi T."/>
            <person name="Furuya T."/>
            <person name="Kikkawa E."/>
            <person name="Omura Y."/>
            <person name="Abe K."/>
            <person name="Kamihara K."/>
            <person name="Katsuta N."/>
            <person name="Sato K."/>
            <person name="Tanikawa M."/>
            <person name="Yamazaki M."/>
            <person name="Ninomiya K."/>
            <person name="Ishibashi T."/>
            <person name="Yamashita H."/>
            <person name="Murakawa K."/>
            <person name="Fujimori K."/>
            <person name="Tanai H."/>
            <person name="Kimata M."/>
            <person name="Watanabe M."/>
            <person name="Hiraoka S."/>
            <person name="Chiba Y."/>
            <person name="Ishida S."/>
            <person name="Ono Y."/>
            <person name="Takiguchi S."/>
            <person name="Watanabe S."/>
            <person name="Yosida M."/>
            <person name="Hotuta T."/>
            <person name="Kusano J."/>
            <person name="Kanehori K."/>
            <person name="Takahashi-Fujii A."/>
            <person name="Hara H."/>
            <person name="Tanase T.-O."/>
            <person name="Nomura Y."/>
            <person name="Togiya S."/>
            <person name="Komai F."/>
            <person name="Hara R."/>
            <person name="Takeuchi K."/>
            <person name="Arita M."/>
            <person name="Imose N."/>
            <person name="Musashino K."/>
            <person name="Yuuki H."/>
            <person name="Oshima A."/>
            <person name="Sasaki N."/>
            <person name="Aotsuka S."/>
            <person name="Yoshikawa Y."/>
            <person name="Matsunawa H."/>
            <person name="Ichihara T."/>
            <person name="Shiohata N."/>
            <person name="Sano S."/>
            <person name="Moriya S."/>
            <person name="Momiyama H."/>
            <person name="Satoh N."/>
            <person name="Takami S."/>
            <person name="Terashima Y."/>
            <person name="Suzuki O."/>
            <person name="Nakagawa S."/>
            <person name="Senoh A."/>
            <person name="Mizoguchi H."/>
            <person name="Goto Y."/>
            <person name="Shimizu F."/>
            <person name="Wakebe H."/>
            <person name="Hishigaki H."/>
            <person name="Watanabe T."/>
            <person name="Sugiyama A."/>
            <person name="Takemoto M."/>
            <person name="Kawakami B."/>
            <person name="Yamazaki M."/>
            <person name="Watanabe K."/>
            <person name="Kumagai A."/>
            <person name="Itakura S."/>
            <person name="Fukuzumi Y."/>
            <person name="Fujimori Y."/>
            <person name="Komiyama M."/>
            <person name="Tashiro H."/>
            <person name="Tanigami A."/>
            <person name="Fujiwara T."/>
            <person name="Ono T."/>
            <person name="Yamada K."/>
            <person name="Fujii Y."/>
            <person name="Ozaki K."/>
            <person name="Hirao M."/>
            <person name="Ohmori Y."/>
            <person name="Kawabata A."/>
            <person name="Hikiji T."/>
            <person name="Kobatake N."/>
            <person name="Inagaki H."/>
            <person name="Ikema Y."/>
            <person name="Okamoto S."/>
            <person name="Okitani R."/>
            <person name="Kawakami T."/>
            <person name="Noguchi S."/>
            <person name="Itoh T."/>
            <person name="Shigeta K."/>
            <person name="Senba T."/>
            <person name="Matsumura K."/>
            <person name="Nakajima Y."/>
            <person name="Mizuno T."/>
            <person name="Morinaga M."/>
            <person name="Sasaki M."/>
            <person name="Togashi T."/>
            <person name="Oyama M."/>
            <person name="Hata H."/>
            <person name="Watanabe M."/>
            <person name="Komatsu T."/>
            <person name="Mizushima-Sugano J."/>
            <person name="Satoh T."/>
            <person name="Shirai Y."/>
            <person name="Takahashi Y."/>
            <person name="Nakagawa K."/>
            <person name="Okumura K."/>
            <person name="Nagase T."/>
            <person name="Nomura N."/>
            <person name="Kikuchi H."/>
            <person name="Masuho Y."/>
            <person name="Yamashita R."/>
            <person name="Nakai K."/>
            <person name="Yada T."/>
            <person name="Nakamura Y."/>
            <person name="Ohara O."/>
            <person name="Isogai T."/>
            <person name="Sugano S."/>
        </authorList>
    </citation>
    <scope>NUCLEOTIDE SEQUENCE [LARGE SCALE MRNA] OF 144-581 (ISOFORM 1)</scope>
    <source>
        <tissue>Colon</tissue>
    </source>
</reference>
<reference key="6">
    <citation type="journal article" date="2009" name="Proc. Natl. Acad. Sci. U.S.A.">
        <title>Inactivating germ-line and somatic mutations in polypeptide N-acetylgalactosaminyltransferase 12 in human colon cancers.</title>
        <authorList>
            <person name="Guda K."/>
            <person name="Moinova H."/>
            <person name="He J."/>
            <person name="Jamison O."/>
            <person name="Ravi L."/>
            <person name="Natale L."/>
            <person name="Lutterbaugh J."/>
            <person name="Lawrence E."/>
            <person name="Lewis S."/>
            <person name="Willson J.K."/>
            <person name="Lowe J.B."/>
            <person name="Wiesner G.L."/>
            <person name="Parmigiani G."/>
            <person name="Barnholtz-Sloan J."/>
            <person name="Dawson D.W."/>
            <person name="Velculescu V.E."/>
            <person name="Kinzler K.W."/>
            <person name="Papadopoulos N."/>
            <person name="Vogelstein B."/>
            <person name="Willis J."/>
            <person name="Gerken T.A."/>
            <person name="Markowitz S.D."/>
        </authorList>
    </citation>
    <scope>VARIANTS CRCS1 TRP-297; ASN-303; ASP-341; HIS-373; HIS-382; PHE-479 AND MET-491</scope>
    <scope>CHARACTERIZATION OF VARIANTS CRCS1 TRP-297; ASN-303; ASP-341; HIS-373; HIS-382; PHE-479 AND MET-491</scope>
    <scope>VARIANTS GLU-3; ARG-46; VAL-119; ASN-261; ARG-272 AND LYS-552</scope>
</reference>
<reference key="7">
    <citation type="journal article" date="2012" name="Hum. Mutat.">
        <title>Inherited deleterious variants in GALNT12 are associated with CRC susceptibility.</title>
        <authorList>
            <person name="Clarke E."/>
            <person name="Green R.C."/>
            <person name="Green J.S."/>
            <person name="Mahoney K."/>
            <person name="Parfrey P.S."/>
            <person name="Younghusband H.B."/>
            <person name="Woods M.O."/>
        </authorList>
    </citation>
    <scope>VARIANTS CRCS1 ASN-303 AND CYS-396</scope>
</reference>
<reference key="8">
    <citation type="journal article" date="2014" name="Hum. Mutat.">
        <title>GALNT12 is not a major contributor of familial colorectal cancer type X.</title>
        <authorList>
            <person name="Segui N."/>
            <person name="Pineda M."/>
            <person name="Navarro M."/>
            <person name="Lazaro C."/>
            <person name="Brunet J."/>
            <person name="Infante M."/>
            <person name="Duran M."/>
            <person name="Soto J.L."/>
            <person name="Blanco I."/>
            <person name="Capella G."/>
            <person name="Valle L."/>
        </authorList>
    </citation>
    <scope>INVOLVEMENT IN CRCS1</scope>
</reference>
<sequence>MWGRTARRRCPRELRRGREALLVLLALLALAGLGSVLRAQRGAGAGAAEPGPPRTPRPGRREPVMPRPPVPANALGARGEAVRLQLQGEELRLQEESVRLHQINIYLSDRISLHRRLPERWNPLCKEKKYDYDNLPRTSVIIAFYNEAWSTLLRTVYSVLETSPDILLEEVILVDDYSDREHLKERLANELSGLPKVRLIRANKREGLVRARLLGASAARGDVLTFLDCHCECHEGWLEPLLQRIHEEESAVVCPVIDVIDWNTFEYLGNSGEPQIGGFDWRLVFTWHTVPERERIRMQSPVDVIRSPTMAGGLFAVSKKYFEYLGSYDTGMEVWGGENLEFSFRIWQCGGVLETHPCSHVGHVFPKQAPYSRNKALANSVRAAEVWMDEFKELYYHRNPRARLEPFGDVTERKQLRDKLQCKDFKWFLETVYPELHVPEDRPGFFGMLQNKGLTDYCFDYNPPDENQIVGHQVILYLCHGMGQNQFFEYTSQKEIRYNTHQPEGCIAVEAGMDTLIMHLCEETAPENQKFILQEDGSLFHEQSKKCVQAARKESSDSFVPLLRDCTNSDHQKWFFKERML</sequence>